<organism>
    <name type="scientific">Bordetella bronchiseptica (strain ATCC BAA-588 / NCTC 13252 / RB50)</name>
    <name type="common">Alcaligenes bronchisepticus</name>
    <dbReference type="NCBI Taxonomy" id="257310"/>
    <lineage>
        <taxon>Bacteria</taxon>
        <taxon>Pseudomonadati</taxon>
        <taxon>Pseudomonadota</taxon>
        <taxon>Betaproteobacteria</taxon>
        <taxon>Burkholderiales</taxon>
        <taxon>Alcaligenaceae</taxon>
        <taxon>Bordetella</taxon>
    </lineage>
</organism>
<comment type="function">
    <text evidence="1">Essential cell division protein. May link together the upstream cell division proteins, which are predominantly cytoplasmic, with the downstream cell division proteins, which are predominantly periplasmic.</text>
</comment>
<comment type="subunit">
    <text evidence="1">Part of a complex composed of FtsB, FtsL and FtsQ.</text>
</comment>
<comment type="subcellular location">
    <subcellularLocation>
        <location evidence="1">Cell inner membrane</location>
        <topology evidence="1">Single-pass type II membrane protein</topology>
    </subcellularLocation>
    <text evidence="1">Localizes to the division septum.</text>
</comment>
<comment type="similarity">
    <text evidence="1">Belongs to the FtsB family.</text>
</comment>
<evidence type="ECO:0000255" key="1">
    <source>
        <dbReference type="HAMAP-Rule" id="MF_00599"/>
    </source>
</evidence>
<evidence type="ECO:0000256" key="2">
    <source>
        <dbReference type="SAM" id="MobiDB-lite"/>
    </source>
</evidence>
<gene>
    <name evidence="1" type="primary">ftsB</name>
    <name type="ordered locus">BB3702</name>
</gene>
<sequence length="118" mass="13123">MRLLFLVLLVLLGLIQYPLWLGKGGWFKVWDLQRQVAEQRETNDGLRARNTALEAEVRDLATGVGAVEERARSELGMMREGEVFVHILPPGTPLPSDNSTPQASALSKPRPPATPPRR</sequence>
<accession>Q7WD76</accession>
<feature type="chain" id="PRO_1000025689" description="Cell division protein FtsB">
    <location>
        <begin position="1"/>
        <end position="118"/>
    </location>
</feature>
<feature type="topological domain" description="Cytoplasmic" evidence="1">
    <location>
        <begin position="1"/>
        <end position="3"/>
    </location>
</feature>
<feature type="transmembrane region" description="Helical" evidence="1">
    <location>
        <begin position="4"/>
        <end position="21"/>
    </location>
</feature>
<feature type="topological domain" description="Periplasmic" evidence="1">
    <location>
        <begin position="22"/>
        <end position="118"/>
    </location>
</feature>
<feature type="region of interest" description="Disordered" evidence="2">
    <location>
        <begin position="88"/>
        <end position="118"/>
    </location>
</feature>
<feature type="coiled-coil region" evidence="1">
    <location>
        <begin position="28"/>
        <end position="62"/>
    </location>
</feature>
<feature type="compositionally biased region" description="Polar residues" evidence="2">
    <location>
        <begin position="95"/>
        <end position="105"/>
    </location>
</feature>
<feature type="compositionally biased region" description="Pro residues" evidence="2">
    <location>
        <begin position="109"/>
        <end position="118"/>
    </location>
</feature>
<keyword id="KW-0131">Cell cycle</keyword>
<keyword id="KW-0132">Cell division</keyword>
<keyword id="KW-0997">Cell inner membrane</keyword>
<keyword id="KW-1003">Cell membrane</keyword>
<keyword id="KW-0175">Coiled coil</keyword>
<keyword id="KW-0472">Membrane</keyword>
<keyword id="KW-0812">Transmembrane</keyword>
<keyword id="KW-1133">Transmembrane helix</keyword>
<name>FTSB_BORBR</name>
<reference key="1">
    <citation type="journal article" date="2003" name="Nat. Genet.">
        <title>Comparative analysis of the genome sequences of Bordetella pertussis, Bordetella parapertussis and Bordetella bronchiseptica.</title>
        <authorList>
            <person name="Parkhill J."/>
            <person name="Sebaihia M."/>
            <person name="Preston A."/>
            <person name="Murphy L.D."/>
            <person name="Thomson N.R."/>
            <person name="Harris D.E."/>
            <person name="Holden M.T.G."/>
            <person name="Churcher C.M."/>
            <person name="Bentley S.D."/>
            <person name="Mungall K.L."/>
            <person name="Cerdeno-Tarraga A.-M."/>
            <person name="Temple L."/>
            <person name="James K.D."/>
            <person name="Harris B."/>
            <person name="Quail M.A."/>
            <person name="Achtman M."/>
            <person name="Atkin R."/>
            <person name="Baker S."/>
            <person name="Basham D."/>
            <person name="Bason N."/>
            <person name="Cherevach I."/>
            <person name="Chillingworth T."/>
            <person name="Collins M."/>
            <person name="Cronin A."/>
            <person name="Davis P."/>
            <person name="Doggett J."/>
            <person name="Feltwell T."/>
            <person name="Goble A."/>
            <person name="Hamlin N."/>
            <person name="Hauser H."/>
            <person name="Holroyd S."/>
            <person name="Jagels K."/>
            <person name="Leather S."/>
            <person name="Moule S."/>
            <person name="Norberczak H."/>
            <person name="O'Neil S."/>
            <person name="Ormond D."/>
            <person name="Price C."/>
            <person name="Rabbinowitsch E."/>
            <person name="Rutter S."/>
            <person name="Sanders M."/>
            <person name="Saunders D."/>
            <person name="Seeger K."/>
            <person name="Sharp S."/>
            <person name="Simmonds M."/>
            <person name="Skelton J."/>
            <person name="Squares R."/>
            <person name="Squares S."/>
            <person name="Stevens K."/>
            <person name="Unwin L."/>
            <person name="Whitehead S."/>
            <person name="Barrell B.G."/>
            <person name="Maskell D.J."/>
        </authorList>
    </citation>
    <scope>NUCLEOTIDE SEQUENCE [LARGE SCALE GENOMIC DNA]</scope>
    <source>
        <strain>ATCC BAA-588 / NCTC 13252 / RB50</strain>
    </source>
</reference>
<dbReference type="EMBL" id="BX640448">
    <property type="protein sequence ID" value="CAE35676.1"/>
    <property type="molecule type" value="Genomic_DNA"/>
</dbReference>
<dbReference type="RefSeq" id="WP_003813698.1">
    <property type="nucleotide sequence ID" value="NC_002927.3"/>
</dbReference>
<dbReference type="SMR" id="Q7WD76"/>
<dbReference type="GeneID" id="69602284"/>
<dbReference type="KEGG" id="bbr:BB3702"/>
<dbReference type="eggNOG" id="COG2919">
    <property type="taxonomic scope" value="Bacteria"/>
</dbReference>
<dbReference type="HOGENOM" id="CLU_134863_5_2_4"/>
<dbReference type="Proteomes" id="UP000001027">
    <property type="component" value="Chromosome"/>
</dbReference>
<dbReference type="GO" id="GO:0032153">
    <property type="term" value="C:cell division site"/>
    <property type="evidence" value="ECO:0007669"/>
    <property type="project" value="UniProtKB-UniRule"/>
</dbReference>
<dbReference type="GO" id="GO:0030428">
    <property type="term" value="C:cell septum"/>
    <property type="evidence" value="ECO:0007669"/>
    <property type="project" value="TreeGrafter"/>
</dbReference>
<dbReference type="GO" id="GO:0005886">
    <property type="term" value="C:plasma membrane"/>
    <property type="evidence" value="ECO:0007669"/>
    <property type="project" value="UniProtKB-SubCell"/>
</dbReference>
<dbReference type="GO" id="GO:0043093">
    <property type="term" value="P:FtsZ-dependent cytokinesis"/>
    <property type="evidence" value="ECO:0007669"/>
    <property type="project" value="UniProtKB-UniRule"/>
</dbReference>
<dbReference type="HAMAP" id="MF_00599">
    <property type="entry name" value="FtsB"/>
    <property type="match status" value="1"/>
</dbReference>
<dbReference type="InterPro" id="IPR023081">
    <property type="entry name" value="Cell_div_FtsB"/>
</dbReference>
<dbReference type="InterPro" id="IPR007060">
    <property type="entry name" value="FtsL/DivIC"/>
</dbReference>
<dbReference type="NCBIfam" id="NF002058">
    <property type="entry name" value="PRK00888.1"/>
    <property type="match status" value="1"/>
</dbReference>
<dbReference type="PANTHER" id="PTHR37485">
    <property type="entry name" value="CELL DIVISION PROTEIN FTSB"/>
    <property type="match status" value="1"/>
</dbReference>
<dbReference type="PANTHER" id="PTHR37485:SF1">
    <property type="entry name" value="CELL DIVISION PROTEIN FTSB"/>
    <property type="match status" value="1"/>
</dbReference>
<dbReference type="Pfam" id="PF04977">
    <property type="entry name" value="DivIC"/>
    <property type="match status" value="1"/>
</dbReference>
<protein>
    <recommendedName>
        <fullName evidence="1">Cell division protein FtsB</fullName>
    </recommendedName>
</protein>
<proteinExistence type="inferred from homology"/>